<proteinExistence type="inferred from homology"/>
<sequence>MLEFNNSTPLTMGVELELQIVNRRDYNLTRGSSDLLVIIDKTDHGYDIKPEITESMIEIATSVHTDHKEMLAELTAMRTLLISAADKLNLGLAGGGAHPFQHWEDQRIYPTDRYRLVSELYGYLAKQFTVYGQHIHIGCATGDEAIRLAHMLARYIPHFITMSASSPFYQGVDTTFQSSRLTSINAFPLSGYMPFVTDWDSFNAYFDKMSSLGIVASMKDFYWDIRPKPEYGTVEIRVCDTPLSIEVAVALAGYAQTLSKFFFAQQELKPAQDTYLTYSYNRFQACRFGLNGALINPINGTQTSIKEDILQTFEMLADIAQELGTTEAIELLRQRIQAGQSDADWLRASYEKSGSLSDVVRQQSAVWMAR</sequence>
<gene>
    <name type="ordered locus">mma_2607</name>
</gene>
<dbReference type="EC" id="6.3.2.2" evidence="1"/>
<dbReference type="EMBL" id="CP000269">
    <property type="protein sequence ID" value="ABR89614.1"/>
    <property type="molecule type" value="Genomic_DNA"/>
</dbReference>
<dbReference type="RefSeq" id="WP_012080459.1">
    <property type="nucleotide sequence ID" value="NC_009659.1"/>
</dbReference>
<dbReference type="SMR" id="A6T1A0"/>
<dbReference type="STRING" id="375286.mma_2607"/>
<dbReference type="KEGG" id="mms:mma_2607"/>
<dbReference type="eggNOG" id="COG2170">
    <property type="taxonomic scope" value="Bacteria"/>
</dbReference>
<dbReference type="HOGENOM" id="CLU_044848_1_1_4"/>
<dbReference type="OrthoDB" id="9769628at2"/>
<dbReference type="Proteomes" id="UP000006388">
    <property type="component" value="Chromosome"/>
</dbReference>
<dbReference type="GO" id="GO:0005524">
    <property type="term" value="F:ATP binding"/>
    <property type="evidence" value="ECO:0007669"/>
    <property type="project" value="UniProtKB-KW"/>
</dbReference>
<dbReference type="GO" id="GO:0004357">
    <property type="term" value="F:glutamate-cysteine ligase activity"/>
    <property type="evidence" value="ECO:0007669"/>
    <property type="project" value="UniProtKB-EC"/>
</dbReference>
<dbReference type="GO" id="GO:0042398">
    <property type="term" value="P:modified amino acid biosynthetic process"/>
    <property type="evidence" value="ECO:0007669"/>
    <property type="project" value="InterPro"/>
</dbReference>
<dbReference type="Gene3D" id="3.30.590.20">
    <property type="match status" value="1"/>
</dbReference>
<dbReference type="HAMAP" id="MF_01609">
    <property type="entry name" value="Glu_cys_ligase_2"/>
    <property type="match status" value="1"/>
</dbReference>
<dbReference type="InterPro" id="IPR050141">
    <property type="entry name" value="GCL_type2/YbdK_subfam"/>
</dbReference>
<dbReference type="InterPro" id="IPR006336">
    <property type="entry name" value="GCS2"/>
</dbReference>
<dbReference type="InterPro" id="IPR014746">
    <property type="entry name" value="Gln_synth/guanido_kin_cat_dom"/>
</dbReference>
<dbReference type="InterPro" id="IPR011793">
    <property type="entry name" value="YbdK"/>
</dbReference>
<dbReference type="NCBIfam" id="TIGR02050">
    <property type="entry name" value="gshA_cyan_rel"/>
    <property type="match status" value="1"/>
</dbReference>
<dbReference type="NCBIfam" id="NF010040">
    <property type="entry name" value="PRK13516.1"/>
    <property type="match status" value="1"/>
</dbReference>
<dbReference type="PANTHER" id="PTHR36510">
    <property type="entry name" value="GLUTAMATE--CYSTEINE LIGASE 2-RELATED"/>
    <property type="match status" value="1"/>
</dbReference>
<dbReference type="PANTHER" id="PTHR36510:SF1">
    <property type="entry name" value="GLUTAMATE--CYSTEINE LIGASE 2-RELATED"/>
    <property type="match status" value="1"/>
</dbReference>
<dbReference type="Pfam" id="PF04107">
    <property type="entry name" value="GCS2"/>
    <property type="match status" value="1"/>
</dbReference>
<dbReference type="SUPFAM" id="SSF55931">
    <property type="entry name" value="Glutamine synthetase/guanido kinase"/>
    <property type="match status" value="1"/>
</dbReference>
<keyword id="KW-0067">ATP-binding</keyword>
<keyword id="KW-0436">Ligase</keyword>
<keyword id="KW-0547">Nucleotide-binding</keyword>
<name>GCS2_JANMA</name>
<reference key="1">
    <citation type="journal article" date="2007" name="PLoS Genet.">
        <title>Genome analysis of Minibacterium massiliensis highlights the convergent evolution of water-living bacteria.</title>
        <authorList>
            <person name="Audic S."/>
            <person name="Robert C."/>
            <person name="Campagna B."/>
            <person name="Parinello H."/>
            <person name="Claverie J.-M."/>
            <person name="Raoult D."/>
            <person name="Drancourt M."/>
        </authorList>
    </citation>
    <scope>NUCLEOTIDE SEQUENCE [LARGE SCALE GENOMIC DNA]</scope>
    <source>
        <strain>Marseille</strain>
    </source>
</reference>
<evidence type="ECO:0000255" key="1">
    <source>
        <dbReference type="HAMAP-Rule" id="MF_01609"/>
    </source>
</evidence>
<protein>
    <recommendedName>
        <fullName evidence="1">Putative glutamate--cysteine ligase 2</fullName>
        <ecNumber evidence="1">6.3.2.2</ecNumber>
    </recommendedName>
    <alternativeName>
        <fullName evidence="1">Gamma-glutamylcysteine synthetase 2</fullName>
        <shortName evidence="1">GCS 2</shortName>
        <shortName evidence="1">Gamma-GCS 2</shortName>
    </alternativeName>
</protein>
<feature type="chain" id="PRO_1000069439" description="Putative glutamate--cysteine ligase 2">
    <location>
        <begin position="1"/>
        <end position="370"/>
    </location>
</feature>
<organism>
    <name type="scientific">Janthinobacterium sp. (strain Marseille)</name>
    <name type="common">Minibacterium massiliensis</name>
    <dbReference type="NCBI Taxonomy" id="375286"/>
    <lineage>
        <taxon>Bacteria</taxon>
        <taxon>Pseudomonadati</taxon>
        <taxon>Pseudomonadota</taxon>
        <taxon>Betaproteobacteria</taxon>
        <taxon>Burkholderiales</taxon>
        <taxon>Oxalobacteraceae</taxon>
        <taxon>Janthinobacterium</taxon>
    </lineage>
</organism>
<comment type="function">
    <text evidence="1">ATP-dependent carboxylate-amine ligase which exhibits weak glutamate--cysteine ligase activity.</text>
</comment>
<comment type="catalytic activity">
    <reaction evidence="1">
        <text>L-cysteine + L-glutamate + ATP = gamma-L-glutamyl-L-cysteine + ADP + phosphate + H(+)</text>
        <dbReference type="Rhea" id="RHEA:13285"/>
        <dbReference type="ChEBI" id="CHEBI:15378"/>
        <dbReference type="ChEBI" id="CHEBI:29985"/>
        <dbReference type="ChEBI" id="CHEBI:30616"/>
        <dbReference type="ChEBI" id="CHEBI:35235"/>
        <dbReference type="ChEBI" id="CHEBI:43474"/>
        <dbReference type="ChEBI" id="CHEBI:58173"/>
        <dbReference type="ChEBI" id="CHEBI:456216"/>
        <dbReference type="EC" id="6.3.2.2"/>
    </reaction>
</comment>
<comment type="similarity">
    <text evidence="1">Belongs to the glutamate--cysteine ligase type 2 family. YbdK subfamily.</text>
</comment>
<accession>A6T1A0</accession>